<name>CO6A5_HUMAN</name>
<protein>
    <recommendedName>
        <fullName>Collagen alpha-5(VI) chain</fullName>
    </recommendedName>
    <alternativeName>
        <fullName>Collagen alpha-1(XXIX) chain</fullName>
    </alternativeName>
    <alternativeName>
        <fullName>von Willebrand factor A domain-containing protein 4</fullName>
    </alternativeName>
</protein>
<dbReference type="EMBL" id="EU085556">
    <property type="protein sequence ID" value="ABW81241.1"/>
    <property type="molecule type" value="mRNA"/>
</dbReference>
<dbReference type="EMBL" id="AM906078">
    <property type="protein sequence ID" value="CAP19997.1"/>
    <property type="molecule type" value="mRNA"/>
</dbReference>
<dbReference type="EMBL" id="AM906079">
    <property type="protein sequence ID" value="CAP19998.1"/>
    <property type="molecule type" value="mRNA"/>
</dbReference>
<dbReference type="EMBL" id="AM906080">
    <property type="protein sequence ID" value="CAP19999.1"/>
    <property type="molecule type" value="mRNA"/>
</dbReference>
<dbReference type="EMBL" id="AM906081">
    <property type="protein sequence ID" value="CAP20000.1"/>
    <property type="molecule type" value="mRNA"/>
</dbReference>
<dbReference type="EMBL" id="AM906082">
    <property type="protein sequence ID" value="CAP20001.1"/>
    <property type="molecule type" value="mRNA"/>
</dbReference>
<dbReference type="EMBL" id="AM906083">
    <property type="protein sequence ID" value="CAP20002.1"/>
    <property type="molecule type" value="mRNA"/>
</dbReference>
<dbReference type="EMBL" id="AM906084">
    <property type="protein sequence ID" value="CAP20003.1"/>
    <property type="molecule type" value="mRNA"/>
</dbReference>
<dbReference type="EMBL" id="AC093004">
    <property type="status" value="NOT_ANNOTATED_CDS"/>
    <property type="molecule type" value="Genomic_DNA"/>
</dbReference>
<dbReference type="EMBL" id="AC117398">
    <property type="status" value="NOT_ANNOTATED_CDS"/>
    <property type="molecule type" value="Genomic_DNA"/>
</dbReference>
<dbReference type="EMBL" id="AK093199">
    <property type="protein sequence ID" value="BAC04092.1"/>
    <property type="status" value="ALT_SEQ"/>
    <property type="molecule type" value="mRNA"/>
</dbReference>
<dbReference type="EMBL" id="AK123718">
    <property type="protein sequence ID" value="BAC85681.1"/>
    <property type="status" value="ALT_INIT"/>
    <property type="molecule type" value="mRNA"/>
</dbReference>
<dbReference type="CCDS" id="CCDS93385.1">
    <molecule id="A8TX70-2"/>
</dbReference>
<dbReference type="RefSeq" id="NP_001265227.1">
    <property type="nucleotide sequence ID" value="NM_001278298.1"/>
</dbReference>
<dbReference type="RefSeq" id="NP_694996.5">
    <molecule id="A8TX70-2"/>
    <property type="nucleotide sequence ID" value="NM_153264.6"/>
</dbReference>
<dbReference type="SMR" id="A8TX70"/>
<dbReference type="BioGRID" id="129134">
    <property type="interactions" value="4"/>
</dbReference>
<dbReference type="FunCoup" id="A8TX70">
    <property type="interactions" value="580"/>
</dbReference>
<dbReference type="STRING" id="9606.ENSP00000265379"/>
<dbReference type="ChEMBL" id="CHEMBL2364188"/>
<dbReference type="GlyCosmos" id="A8TX70">
    <property type="glycosylation" value="4 sites, No reported glycans"/>
</dbReference>
<dbReference type="GlyGen" id="A8TX70">
    <property type="glycosylation" value="6 sites"/>
</dbReference>
<dbReference type="iPTMnet" id="A8TX70"/>
<dbReference type="PhosphoSitePlus" id="A8TX70"/>
<dbReference type="BioMuta" id="COL6A5"/>
<dbReference type="jPOST" id="A8TX70"/>
<dbReference type="MassIVE" id="A8TX70"/>
<dbReference type="PaxDb" id="9606-ENSP00000265379"/>
<dbReference type="PeptideAtlas" id="A8TX70"/>
<dbReference type="ProteomicsDB" id="2486">
    <molecule id="A8TX70-1"/>
</dbReference>
<dbReference type="ProteomicsDB" id="2487">
    <molecule id="A8TX70-2"/>
</dbReference>
<dbReference type="Pumba" id="A8TX70"/>
<dbReference type="DNASU" id="256076"/>
<dbReference type="Ensembl" id="ENST00000312481.11">
    <molecule id="A8TX70-1"/>
    <property type="protein sequence ID" value="ENSP00000309762.7"/>
    <property type="gene ID" value="ENSG00000172752.16"/>
</dbReference>
<dbReference type="Ensembl" id="ENST00000512836.6">
    <molecule id="A8TX70-2"/>
    <property type="protein sequence ID" value="ENSP00000422898.2"/>
    <property type="gene ID" value="ENSG00000172752.16"/>
</dbReference>
<dbReference type="GeneID" id="256076"/>
<dbReference type="KEGG" id="hsa:256076"/>
<dbReference type="UCSC" id="uc062ntw.1">
    <molecule id="A8TX70-1"/>
    <property type="organism name" value="human"/>
</dbReference>
<dbReference type="AGR" id="HGNC:26674"/>
<dbReference type="CTD" id="256076"/>
<dbReference type="DisGeNET" id="256076"/>
<dbReference type="GeneCards" id="COL6A5"/>
<dbReference type="HGNC" id="HGNC:26674">
    <property type="gene designation" value="COL6A5"/>
</dbReference>
<dbReference type="MIM" id="611916">
    <property type="type" value="gene"/>
</dbReference>
<dbReference type="neXtProt" id="NX_A8TX70"/>
<dbReference type="OpenTargets" id="ENSG00000172752"/>
<dbReference type="PharmGKB" id="PA165696956"/>
<dbReference type="VEuPathDB" id="HostDB:ENSG00000172752"/>
<dbReference type="eggNOG" id="KOG3544">
    <property type="taxonomic scope" value="Eukaryota"/>
</dbReference>
<dbReference type="GeneTree" id="ENSGT00940000162990"/>
<dbReference type="HOGENOM" id="CLU_000182_1_0_1"/>
<dbReference type="InParanoid" id="A8TX70"/>
<dbReference type="OMA" id="PCWKEKC"/>
<dbReference type="OrthoDB" id="4473401at2759"/>
<dbReference type="PAN-GO" id="A8TX70">
    <property type="GO annotations" value="1 GO annotation based on evolutionary models"/>
</dbReference>
<dbReference type="PhylomeDB" id="A8TX70"/>
<dbReference type="PathwayCommons" id="A8TX70"/>
<dbReference type="Reactome" id="R-HSA-1442490">
    <property type="pathway name" value="Collagen degradation"/>
</dbReference>
<dbReference type="Reactome" id="R-HSA-1650814">
    <property type="pathway name" value="Collagen biosynthesis and modifying enzymes"/>
</dbReference>
<dbReference type="Reactome" id="R-HSA-186797">
    <property type="pathway name" value="Signaling by PDGF"/>
</dbReference>
<dbReference type="Reactome" id="R-HSA-2022090">
    <property type="pathway name" value="Assembly of collagen fibrils and other multimeric structures"/>
</dbReference>
<dbReference type="Reactome" id="R-HSA-216083">
    <property type="pathway name" value="Integrin cell surface interactions"/>
</dbReference>
<dbReference type="Reactome" id="R-HSA-3000178">
    <property type="pathway name" value="ECM proteoglycans"/>
</dbReference>
<dbReference type="Reactome" id="R-HSA-419037">
    <property type="pathway name" value="NCAM1 interactions"/>
</dbReference>
<dbReference type="Reactome" id="R-HSA-8948216">
    <property type="pathway name" value="Collagen chain trimerization"/>
</dbReference>
<dbReference type="BioGRID-ORCS" id="256076">
    <property type="hits" value="7 hits in 315 CRISPR screens"/>
</dbReference>
<dbReference type="GenomeRNAi" id="256076"/>
<dbReference type="Pharos" id="A8TX70">
    <property type="development level" value="Tbio"/>
</dbReference>
<dbReference type="PRO" id="PR:A8TX70"/>
<dbReference type="Proteomes" id="UP000005640">
    <property type="component" value="Chromosome 3"/>
</dbReference>
<dbReference type="RNAct" id="A8TX70">
    <property type="molecule type" value="protein"/>
</dbReference>
<dbReference type="Bgee" id="ENSG00000172752">
    <property type="expression patterns" value="Expressed in upper leg skin and 42 other cell types or tissues"/>
</dbReference>
<dbReference type="ExpressionAtlas" id="A8TX70">
    <property type="expression patterns" value="baseline and differential"/>
</dbReference>
<dbReference type="GO" id="GO:0005589">
    <property type="term" value="C:collagen type VI trimer"/>
    <property type="evidence" value="ECO:0000304"/>
    <property type="project" value="GO_Central"/>
</dbReference>
<dbReference type="GO" id="GO:0062023">
    <property type="term" value="C:collagen-containing extracellular matrix"/>
    <property type="evidence" value="ECO:0007005"/>
    <property type="project" value="BHF-UCL"/>
</dbReference>
<dbReference type="GO" id="GO:0005576">
    <property type="term" value="C:extracellular region"/>
    <property type="evidence" value="ECO:0000314"/>
    <property type="project" value="MGI"/>
</dbReference>
<dbReference type="GO" id="GO:0030020">
    <property type="term" value="F:extracellular matrix structural constituent conferring tensile strength"/>
    <property type="evidence" value="ECO:0007005"/>
    <property type="project" value="BHF-UCL"/>
</dbReference>
<dbReference type="GO" id="GO:0007155">
    <property type="term" value="P:cell adhesion"/>
    <property type="evidence" value="ECO:0007669"/>
    <property type="project" value="UniProtKB-KW"/>
</dbReference>
<dbReference type="GO" id="GO:0030198">
    <property type="term" value="P:extracellular matrix organization"/>
    <property type="evidence" value="ECO:0000318"/>
    <property type="project" value="GO_Central"/>
</dbReference>
<dbReference type="CDD" id="cd01472">
    <property type="entry name" value="vWA_collagen"/>
    <property type="match status" value="2"/>
</dbReference>
<dbReference type="CDD" id="cd01450">
    <property type="entry name" value="vWFA_subfamily_ECM"/>
    <property type="match status" value="5"/>
</dbReference>
<dbReference type="FunFam" id="3.40.50.410:FF:000004">
    <property type="entry name" value="collagen alpha-6(VI) chain"/>
    <property type="match status" value="2"/>
</dbReference>
<dbReference type="FunFam" id="3.40.50.410:FF:000003">
    <property type="entry name" value="Collagen type VI alpha 3 chain"/>
    <property type="match status" value="2"/>
</dbReference>
<dbReference type="FunFam" id="3.40.50.410:FF:000016">
    <property type="entry name" value="Collagen type VI alpha 3 chain"/>
    <property type="match status" value="1"/>
</dbReference>
<dbReference type="FunFam" id="3.40.50.410:FF:000082">
    <property type="entry name" value="Collagen type VI alpha 5 chain"/>
    <property type="match status" value="1"/>
</dbReference>
<dbReference type="FunFam" id="3.40.50.410:FF:000044">
    <property type="entry name" value="Collagen type VI alpha 6 chain"/>
    <property type="match status" value="1"/>
</dbReference>
<dbReference type="FunFam" id="3.40.50.410:FF:000021">
    <property type="entry name" value="Collagen, type VI, alpha 3"/>
    <property type="match status" value="2"/>
</dbReference>
<dbReference type="Gene3D" id="3.40.50.410">
    <property type="entry name" value="von Willebrand factor, type A domain"/>
    <property type="match status" value="9"/>
</dbReference>
<dbReference type="InterPro" id="IPR008160">
    <property type="entry name" value="Collagen"/>
</dbReference>
<dbReference type="InterPro" id="IPR050525">
    <property type="entry name" value="ECM_Assembly_Org"/>
</dbReference>
<dbReference type="InterPro" id="IPR002035">
    <property type="entry name" value="VWF_A"/>
</dbReference>
<dbReference type="InterPro" id="IPR036465">
    <property type="entry name" value="vWFA_dom_sf"/>
</dbReference>
<dbReference type="PANTHER" id="PTHR24020">
    <property type="entry name" value="COLLAGEN ALPHA"/>
    <property type="match status" value="1"/>
</dbReference>
<dbReference type="Pfam" id="PF01391">
    <property type="entry name" value="Collagen"/>
    <property type="match status" value="4"/>
</dbReference>
<dbReference type="Pfam" id="PF00092">
    <property type="entry name" value="VWA"/>
    <property type="match status" value="9"/>
</dbReference>
<dbReference type="PRINTS" id="PR00453">
    <property type="entry name" value="VWFADOMAIN"/>
</dbReference>
<dbReference type="SMART" id="SM00327">
    <property type="entry name" value="VWA"/>
    <property type="match status" value="9"/>
</dbReference>
<dbReference type="SUPFAM" id="SSF53300">
    <property type="entry name" value="vWA-like"/>
    <property type="match status" value="10"/>
</dbReference>
<dbReference type="PROSITE" id="PS50234">
    <property type="entry name" value="VWFA"/>
    <property type="match status" value="9"/>
</dbReference>
<reference key="1">
    <citation type="journal article" date="2007" name="PLoS Biol.">
        <title>Variants in a novel epidermal collagen gene (COL29A1) are associated with atopic dermatitis.</title>
        <authorList>
            <person name="Soederhaell C."/>
            <person name="Marenholz I."/>
            <person name="Kerscher T."/>
            <person name="Rueschendorf F."/>
            <person name="Esparza-Gordillo J."/>
            <person name="Worm M."/>
            <person name="Gruber C."/>
            <person name="Mayr G."/>
            <person name="Albrecht M."/>
            <person name="Rohde K."/>
            <person name="Schulz H."/>
            <person name="Wahn U."/>
            <person name="Hubner N."/>
            <person name="Lee Y.-A."/>
        </authorList>
    </citation>
    <scope>NUCLEOTIDE SEQUENCE [MRNA] (ISOFORM 1)</scope>
    <scope>TISSUE SPECIFICITY</scope>
    <scope>POSSIBLE INVOLVEMENT IN ATOPIC DERMATITIS</scope>
    <source>
        <tissue>Skin</tissue>
    </source>
</reference>
<reference key="2">
    <citation type="journal article" date="2008" name="J. Biol. Chem.">
        <title>Three novel collagen VI chains with high homology to the alpha 3 chain.</title>
        <authorList>
            <person name="Gara S.K."/>
            <person name="Grumati P."/>
            <person name="Urciuolo A."/>
            <person name="Bonaldo P."/>
            <person name="Kobbe B."/>
            <person name="Koch M."/>
            <person name="Paulsson M."/>
            <person name="Wagener R."/>
        </authorList>
    </citation>
    <scope>NUCLEOTIDE SEQUENCE [MRNA] (ISOFORM 1)</scope>
    <scope>VARIANTS LYS-455; PRO-1280; ARG-2188 AND ASP-2205</scope>
</reference>
<reference key="3">
    <citation type="journal article" date="2006" name="Nature">
        <title>The DNA sequence, annotation and analysis of human chromosome 3.</title>
        <authorList>
            <person name="Muzny D.M."/>
            <person name="Scherer S.E."/>
            <person name="Kaul R."/>
            <person name="Wang J."/>
            <person name="Yu J."/>
            <person name="Sudbrak R."/>
            <person name="Buhay C.J."/>
            <person name="Chen R."/>
            <person name="Cree A."/>
            <person name="Ding Y."/>
            <person name="Dugan-Rocha S."/>
            <person name="Gill R."/>
            <person name="Gunaratne P."/>
            <person name="Harris R.A."/>
            <person name="Hawes A.C."/>
            <person name="Hernandez J."/>
            <person name="Hodgson A.V."/>
            <person name="Hume J."/>
            <person name="Jackson A."/>
            <person name="Khan Z.M."/>
            <person name="Kovar-Smith C."/>
            <person name="Lewis L.R."/>
            <person name="Lozado R.J."/>
            <person name="Metzker M.L."/>
            <person name="Milosavljevic A."/>
            <person name="Miner G.R."/>
            <person name="Morgan M.B."/>
            <person name="Nazareth L.V."/>
            <person name="Scott G."/>
            <person name="Sodergren E."/>
            <person name="Song X.-Z."/>
            <person name="Steffen D."/>
            <person name="Wei S."/>
            <person name="Wheeler D.A."/>
            <person name="Wright M.W."/>
            <person name="Worley K.C."/>
            <person name="Yuan Y."/>
            <person name="Zhang Z."/>
            <person name="Adams C.Q."/>
            <person name="Ansari-Lari M.A."/>
            <person name="Ayele M."/>
            <person name="Brown M.J."/>
            <person name="Chen G."/>
            <person name="Chen Z."/>
            <person name="Clendenning J."/>
            <person name="Clerc-Blankenburg K.P."/>
            <person name="Chen R."/>
            <person name="Chen Z."/>
            <person name="Davis C."/>
            <person name="Delgado O."/>
            <person name="Dinh H.H."/>
            <person name="Dong W."/>
            <person name="Draper H."/>
            <person name="Ernst S."/>
            <person name="Fu G."/>
            <person name="Gonzalez-Garay M.L."/>
            <person name="Garcia D.K."/>
            <person name="Gillett W."/>
            <person name="Gu J."/>
            <person name="Hao B."/>
            <person name="Haugen E."/>
            <person name="Havlak P."/>
            <person name="He X."/>
            <person name="Hennig S."/>
            <person name="Hu S."/>
            <person name="Huang W."/>
            <person name="Jackson L.R."/>
            <person name="Jacob L.S."/>
            <person name="Kelly S.H."/>
            <person name="Kube M."/>
            <person name="Levy R."/>
            <person name="Li Z."/>
            <person name="Liu B."/>
            <person name="Liu J."/>
            <person name="Liu W."/>
            <person name="Lu J."/>
            <person name="Maheshwari M."/>
            <person name="Nguyen B.-V."/>
            <person name="Okwuonu G.O."/>
            <person name="Palmeiri A."/>
            <person name="Pasternak S."/>
            <person name="Perez L.M."/>
            <person name="Phelps K.A."/>
            <person name="Plopper F.J."/>
            <person name="Qiang B."/>
            <person name="Raymond C."/>
            <person name="Rodriguez R."/>
            <person name="Saenphimmachak C."/>
            <person name="Santibanez J."/>
            <person name="Shen H."/>
            <person name="Shen Y."/>
            <person name="Subramanian S."/>
            <person name="Tabor P.E."/>
            <person name="Verduzco D."/>
            <person name="Waldron L."/>
            <person name="Wang J."/>
            <person name="Wang J."/>
            <person name="Wang Q."/>
            <person name="Williams G.A."/>
            <person name="Wong G.K.-S."/>
            <person name="Yao Z."/>
            <person name="Zhang J."/>
            <person name="Zhang X."/>
            <person name="Zhao G."/>
            <person name="Zhou J."/>
            <person name="Zhou Y."/>
            <person name="Nelson D."/>
            <person name="Lehrach H."/>
            <person name="Reinhardt R."/>
            <person name="Naylor S.L."/>
            <person name="Yang H."/>
            <person name="Olson M."/>
            <person name="Weinstock G."/>
            <person name="Gibbs R.A."/>
        </authorList>
    </citation>
    <scope>NUCLEOTIDE SEQUENCE [LARGE SCALE GENOMIC DNA]</scope>
</reference>
<reference key="4">
    <citation type="journal article" date="2004" name="Nat. Genet.">
        <title>Complete sequencing and characterization of 21,243 full-length human cDNAs.</title>
        <authorList>
            <person name="Ota T."/>
            <person name="Suzuki Y."/>
            <person name="Nishikawa T."/>
            <person name="Otsuki T."/>
            <person name="Sugiyama T."/>
            <person name="Irie R."/>
            <person name="Wakamatsu A."/>
            <person name="Hayashi K."/>
            <person name="Sato H."/>
            <person name="Nagai K."/>
            <person name="Kimura K."/>
            <person name="Makita H."/>
            <person name="Sekine M."/>
            <person name="Obayashi M."/>
            <person name="Nishi T."/>
            <person name="Shibahara T."/>
            <person name="Tanaka T."/>
            <person name="Ishii S."/>
            <person name="Yamamoto J."/>
            <person name="Saito K."/>
            <person name="Kawai Y."/>
            <person name="Isono Y."/>
            <person name="Nakamura Y."/>
            <person name="Nagahari K."/>
            <person name="Murakami K."/>
            <person name="Yasuda T."/>
            <person name="Iwayanagi T."/>
            <person name="Wagatsuma M."/>
            <person name="Shiratori A."/>
            <person name="Sudo H."/>
            <person name="Hosoiri T."/>
            <person name="Kaku Y."/>
            <person name="Kodaira H."/>
            <person name="Kondo H."/>
            <person name="Sugawara M."/>
            <person name="Takahashi M."/>
            <person name="Kanda K."/>
            <person name="Yokoi T."/>
            <person name="Furuya T."/>
            <person name="Kikkawa E."/>
            <person name="Omura Y."/>
            <person name="Abe K."/>
            <person name="Kamihara K."/>
            <person name="Katsuta N."/>
            <person name="Sato K."/>
            <person name="Tanikawa M."/>
            <person name="Yamazaki M."/>
            <person name="Ninomiya K."/>
            <person name="Ishibashi T."/>
            <person name="Yamashita H."/>
            <person name="Murakawa K."/>
            <person name="Fujimori K."/>
            <person name="Tanai H."/>
            <person name="Kimata M."/>
            <person name="Watanabe M."/>
            <person name="Hiraoka S."/>
            <person name="Chiba Y."/>
            <person name="Ishida S."/>
            <person name="Ono Y."/>
            <person name="Takiguchi S."/>
            <person name="Watanabe S."/>
            <person name="Yosida M."/>
            <person name="Hotuta T."/>
            <person name="Kusano J."/>
            <person name="Kanehori K."/>
            <person name="Takahashi-Fujii A."/>
            <person name="Hara H."/>
            <person name="Tanase T.-O."/>
            <person name="Nomura Y."/>
            <person name="Togiya S."/>
            <person name="Komai F."/>
            <person name="Hara R."/>
            <person name="Takeuchi K."/>
            <person name="Arita M."/>
            <person name="Imose N."/>
            <person name="Musashino K."/>
            <person name="Yuuki H."/>
            <person name="Oshima A."/>
            <person name="Sasaki N."/>
            <person name="Aotsuka S."/>
            <person name="Yoshikawa Y."/>
            <person name="Matsunawa H."/>
            <person name="Ichihara T."/>
            <person name="Shiohata N."/>
            <person name="Sano S."/>
            <person name="Moriya S."/>
            <person name="Momiyama H."/>
            <person name="Satoh N."/>
            <person name="Takami S."/>
            <person name="Terashima Y."/>
            <person name="Suzuki O."/>
            <person name="Nakagawa S."/>
            <person name="Senoh A."/>
            <person name="Mizoguchi H."/>
            <person name="Goto Y."/>
            <person name="Shimizu F."/>
            <person name="Wakebe H."/>
            <person name="Hishigaki H."/>
            <person name="Watanabe T."/>
            <person name="Sugiyama A."/>
            <person name="Takemoto M."/>
            <person name="Kawakami B."/>
            <person name="Yamazaki M."/>
            <person name="Watanabe K."/>
            <person name="Kumagai A."/>
            <person name="Itakura S."/>
            <person name="Fukuzumi Y."/>
            <person name="Fujimori Y."/>
            <person name="Komiyama M."/>
            <person name="Tashiro H."/>
            <person name="Tanigami A."/>
            <person name="Fujiwara T."/>
            <person name="Ono T."/>
            <person name="Yamada K."/>
            <person name="Fujii Y."/>
            <person name="Ozaki K."/>
            <person name="Hirao M."/>
            <person name="Ohmori Y."/>
            <person name="Kawabata A."/>
            <person name="Hikiji T."/>
            <person name="Kobatake N."/>
            <person name="Inagaki H."/>
            <person name="Ikema Y."/>
            <person name="Okamoto S."/>
            <person name="Okitani R."/>
            <person name="Kawakami T."/>
            <person name="Noguchi S."/>
            <person name="Itoh T."/>
            <person name="Shigeta K."/>
            <person name="Senba T."/>
            <person name="Matsumura K."/>
            <person name="Nakajima Y."/>
            <person name="Mizuno T."/>
            <person name="Morinaga M."/>
            <person name="Sasaki M."/>
            <person name="Togashi T."/>
            <person name="Oyama M."/>
            <person name="Hata H."/>
            <person name="Watanabe M."/>
            <person name="Komatsu T."/>
            <person name="Mizushima-Sugano J."/>
            <person name="Satoh T."/>
            <person name="Shirai Y."/>
            <person name="Takahashi Y."/>
            <person name="Nakagawa K."/>
            <person name="Okumura K."/>
            <person name="Nagase T."/>
            <person name="Nomura N."/>
            <person name="Kikuchi H."/>
            <person name="Masuho Y."/>
            <person name="Yamashita R."/>
            <person name="Nakai K."/>
            <person name="Yada T."/>
            <person name="Nakamura Y."/>
            <person name="Ohara O."/>
            <person name="Isogai T."/>
            <person name="Sugano S."/>
        </authorList>
    </citation>
    <scope>NUCLEOTIDE SEQUENCE [LARGE SCALE MRNA] OF 1900-2615 (ISOFORM 2)</scope>
    <scope>NUCLEOTIDE SEQUENCE [LARGE SCALE MRNA] OF 2096-2615 (ISOFORM 1)</scope>
    <scope>VARIANTS ARG-2188 AND ASP-2205</scope>
    <source>
        <tissue>Lung</tissue>
        <tissue>Testis</tissue>
    </source>
</reference>
<sequence length="2615" mass="289926">MKILLIIFVLIIWTETLADQSPGPGPVYADVVFLVDSSDHLGPKSFPFVKTFINKMINSLPIEANKYRVALAQYSDEFHSEFHLSTFKGRSPMLNHLKKNFQFIGGSLQIGKALQEAHRTYFSAPINGRDRKQFPPILVVLASAESEDEVEEASKALQKDGVKIISVGVQKASEENLKAMATSHFHFNLRTIRDLSTFSQNMTQIIKDVTKYKEGAVDADMQVHFPISCQKDSLADLVFLVDESLGTGGNLRHLQTFLENITSSMDVKENCMRLGLMSYSNSAKTISFLKSSTTQSEFQQQIKNLSIQVGKSNTGAAIDQMRRDGFSESYGSRRAQGVPQIAVLVTHRPSDDEVHDAALNLRLEDVNVFALSIQGANNTQLEEIVSYPPEQTISTLKSYADLETYSTKFLKKLQNEIWSQISTYAEQRNLDKTGCVDTKEADIHFLIDGSSSIQEKQFEQIKRFMLEVTEMFSIGPDKVRVGVVQYSDDTEVEFYITDYSNDIDLRKAIFNIKQLTGGTYTGKALDYILQIIKNGMKDRMSKVPCYLIVLTDGMSTDRVVEPAKRLRAEQITVHAVGIGAANKIELQEIAGKEERVSFGQNFDALKSIKNEVVREICAEKGCEDMKADIMFLVDSSWSIGNENFRKMKIFMKNLLTKIQIGADKTQIGVVQFSDKTKEEFQLNRYFTQQEISDAIDRMSLINEGTLTGKALNFVGQYFTHSKGARLGAKKFLILITDGVAQDDVRDPARILRGKDVTIFSVGVYNANRSQLEEISGDSSLVFHVENFDHLKALERKLIFRVCALHDCKRITLLDVVFVLDHSGSIKKQYQDHMINLTIHLVKKADVGRDRVQFGALKYSDQPNILFYLNTYSNRSAIIENLRKRRDTGGNTYTAKALKHANALFTEEHGSRIKQNVKQMLIVITDGESHDHDQLNDTALELRNKGITIFAVGVGKANQKELEGMAGNKNNTIYVDNFDKLKDVFTLVQERMCTEAPEVCHLQEADVIFLCDGSDRVSNSDFVTMTTFLSDLIDNFDIQSQRMKIGMAQFGSNYQSIIELKNSLTKTQWKTQIQNVSKSGGFPRIDFALKKVSNMFNLHAGGRRNAGVPQTLVVITSGDPRYDVADAVKTLKDLGICVLVLGIGDVYKEHLLPITGNSEKIITFQDFDKLKNVDVKKRIIREICQSCGKTNCFMDIVVGFDISTHVQGQPLFQGHPQLESYLPGILEDISSIKGVSCGAGTEAQVSLAFKVNSDQGFPAKFQIYQKAVFDSLLQVNVSGPTHLNAQFLRSLWDTFKDKSASRGQVLLIFSDGLQSESNIMLENQSDRLREAGLDALLVVSLNTTAHHEFSSFEFGKRFDYRTHLTIGMRELGKKLSQYLGNIAERTCCCTFCKCPGIPGPHGTRGLQAMKGSQGLKGSRGHRGEDGNPGVRGDTGPQGDKGIAGCPGAWGQKGLKGFSGPKGGHGDDGIDGLDGEEGCHGFPGIKGEKGDPGSQGSPGSRGAPGQYGEKGFPGDPGNPGQNNNIKGQKGSKGEQGRQGRSGQKGVQGSPSSRGSRGREGQRGLRGVSGEPGNPGPTGTLGAEGLQGPQGSQGNPGRKGEKGSQGQKGPQGSPGLMGAKGSTGRPGLLGKKGEPGLPGDLGPVGQTGQRGRQGDSGIPGYGQMGRKGVKGPRGFPGDAGQKGDIGNPGIPGGPGPKGFRGLALTVGLKGEEGSRGLPGPPGQRGIKGMAGQPVYSQCDLIRFLREHSPCWKEKCPAYPTELVFALDNSYDVTEESFNKTRDIITSIVNDLNIRENNCPVGARVAMVSYNSGTSYLIRWSDYNRKKQLLQQLSQIKYQDTTEPRDVGNAMRFVTRNVFKRTYAGANVRRVAVFFSNGQTASRSSIITATMEFSALDISPTVFAFDERVFLEAFGFDNTGTFQVIPVPPNGENQTLERLRRCALCYDKCFPNACIREAFLPEDSYMDVVFLIDNSRNIAKDEFKAVKALVSSVIDNFNIASDPLISDSGDRIALLSYSPWESSRRKMGTVKTEFDFITYDNQLLMKNHIQTSFQQLNGEATIGRALLWTTENLFPETPYLRKHKVIFVVSAGENYERKEFVKMMALRAKCQGYVIFVISLGSTRKDDMEELASYPLDQHLIQLGRIHKPDLNYIAKFLKPFLYSVRRGFNQYPPPMLEDACRLINLGGENIQNDGFQFVTELQEDFLGGNGFIGQELNSGRESPFVKTEDNGSDYLVYLPSQMFEPQKLMINYEKDQKSAEIASLTSGHENYGRKEEPDHTYEPGDVSLQEYYMDVAFLIDASQRVGSDEFKEVKAFITSVLDYFHIAPTPLTSTLGDRVAVLSYSPPGYMPNTEECPVYLEFDLVTYNSIHQMKHHLQDSQQLNGDVFIGHALQWTIDNVFVGTPNLRKNKVIFVISAGETNSLDKDVLRNVSLRAKCQGYSIFVFSFGPKHNDKELEELASHPLDHHLVQLGRTHKPDWNYIIKFVKPFVHLIRRAINKYPTEDMKATCVNMTSPNPENGGTENTVLLLPGIYEIKTENGDLFDEFDSQAQHLLVLGNNHSSGSETATDLMQKLYLLFSTEKLAMKDKEKAHLEEISALVVDKQQEKEDKEMEATDI</sequence>
<evidence type="ECO:0000250" key="1"/>
<evidence type="ECO:0000255" key="2"/>
<evidence type="ECO:0000255" key="3">
    <source>
        <dbReference type="PROSITE-ProRule" id="PRU00219"/>
    </source>
</evidence>
<evidence type="ECO:0000256" key="4">
    <source>
        <dbReference type="SAM" id="MobiDB-lite"/>
    </source>
</evidence>
<evidence type="ECO:0000269" key="5">
    <source>
    </source>
</evidence>
<evidence type="ECO:0000269" key="6">
    <source>
    </source>
</evidence>
<evidence type="ECO:0000269" key="7">
    <source>
    </source>
</evidence>
<evidence type="ECO:0000303" key="8">
    <source>
    </source>
</evidence>
<evidence type="ECO:0000305" key="9"/>
<proteinExistence type="evidence at protein level"/>
<comment type="function">
    <text evidence="1">Collagen VI acts as a cell-binding protein.</text>
</comment>
<comment type="subunit">
    <text evidence="9">Trimers composed of three different chains: alpha-1(VI), alpha-2(VI), and alpha-3(VI) or alpha-5(VI) or alpha-6(VI).</text>
</comment>
<comment type="subcellular location">
    <subcellularLocation>
        <location evidence="1">Secreted</location>
        <location evidence="1">Extracellular space</location>
        <location evidence="1">Extracellular matrix</location>
    </subcellularLocation>
    <text evidence="1">Deposed in the extracellular matrix of skeletal muscle.</text>
</comment>
<comment type="alternative products">
    <event type="alternative splicing"/>
    <isoform>
        <id>A8TX70-1</id>
        <name>1</name>
        <sequence type="displayed"/>
    </isoform>
    <isoform>
        <id>A8TX70-2</id>
        <name>2</name>
        <sequence type="described" ref="VSP_033912 VSP_033913"/>
    </isoform>
</comment>
<comment type="tissue specificity">
    <text evidence="6">Expressed in skin, followed by lung, small intestine, colon and testis. In skin, it is expressed in the epidermis with strongest staining in suprabasal viable layers. In ATOD patients, it is absent in the most differentiated upper spinous and granular layers (at protein level).</text>
</comment>
<comment type="PTM">
    <text evidence="1">Prolines at the third position of the tripeptide repeating unit (G-X-Y) are hydroxylated in some or all of the chains.</text>
</comment>
<comment type="disease">
    <text>Patients affected by atopic dermatitis display an abnormal distribution of COL29A1 mRNA and protein in skin suggesting that COL29A1 may be involved in the pathogenesis of the disease.</text>
</comment>
<comment type="similarity">
    <text evidence="9">Belongs to the type VI collagen family.</text>
</comment>
<comment type="sequence caution" evidence="9">
    <conflict type="erroneous initiation">
        <sequence resource="EMBL-CDS" id="BAC04092"/>
    </conflict>
    <text>Truncated N-terminus.</text>
</comment>
<comment type="sequence caution" evidence="9">
    <conflict type="frameshift">
        <sequence resource="EMBL-CDS" id="BAC04092"/>
    </conflict>
</comment>
<comment type="sequence caution" evidence="9">
    <conflict type="erroneous initiation">
        <sequence resource="EMBL-CDS" id="BAC85681"/>
    </conflict>
</comment>
<accession>A8TX70</accession>
<accession>A9J6L2</accession>
<accession>A9J6L4</accession>
<accession>A9J6L6</accession>
<accession>A9J6L7</accession>
<accession>A9J6M0</accession>
<accession>A9J6M1</accession>
<accession>A9J6M2</accession>
<accession>B5MEA7</accession>
<accession>Q6ZW26</accession>
<accession>Q8NA36</accession>
<keyword id="KW-0025">Alternative splicing</keyword>
<keyword id="KW-0130">Cell adhesion</keyword>
<keyword id="KW-0176">Collagen</keyword>
<keyword id="KW-0272">Extracellular matrix</keyword>
<keyword id="KW-0325">Glycoprotein</keyword>
<keyword id="KW-0379">Hydroxylation</keyword>
<keyword id="KW-1267">Proteomics identification</keyword>
<keyword id="KW-1185">Reference proteome</keyword>
<keyword id="KW-0677">Repeat</keyword>
<keyword id="KW-0964">Secreted</keyword>
<keyword id="KW-0732">Signal</keyword>
<gene>
    <name type="primary">COL6A5</name>
    <name type="synonym">COL29A1</name>
    <name type="synonym">VWA4</name>
</gene>
<organism>
    <name type="scientific">Homo sapiens</name>
    <name type="common">Human</name>
    <dbReference type="NCBI Taxonomy" id="9606"/>
    <lineage>
        <taxon>Eukaryota</taxon>
        <taxon>Metazoa</taxon>
        <taxon>Chordata</taxon>
        <taxon>Craniata</taxon>
        <taxon>Vertebrata</taxon>
        <taxon>Euteleostomi</taxon>
        <taxon>Mammalia</taxon>
        <taxon>Eutheria</taxon>
        <taxon>Euarchontoglires</taxon>
        <taxon>Primates</taxon>
        <taxon>Haplorrhini</taxon>
        <taxon>Catarrhini</taxon>
        <taxon>Hominidae</taxon>
        <taxon>Homo</taxon>
    </lineage>
</organism>
<feature type="signal peptide" evidence="2">
    <location>
        <begin position="1"/>
        <end position="18"/>
    </location>
</feature>
<feature type="chain" id="PRO_5000294475" description="Collagen alpha-5(VI) chain">
    <location>
        <begin position="19"/>
        <end position="2615"/>
    </location>
</feature>
<feature type="domain" description="VWFA 1" evidence="3">
    <location>
        <begin position="30"/>
        <end position="209"/>
    </location>
</feature>
<feature type="domain" description="VWFA 2" evidence="3">
    <location>
        <begin position="236"/>
        <end position="413"/>
    </location>
</feature>
<feature type="domain" description="VWFA 3" evidence="3">
    <location>
        <begin position="442"/>
        <end position="612"/>
    </location>
</feature>
<feature type="domain" description="VWFA 4" evidence="3">
    <location>
        <begin position="628"/>
        <end position="797"/>
    </location>
</feature>
<feature type="domain" description="VWFA 5" evidence="3">
    <location>
        <begin position="814"/>
        <end position="987"/>
    </location>
</feature>
<feature type="domain" description="VWFA 6" evidence="3">
    <location>
        <begin position="1005"/>
        <end position="1178"/>
    </location>
</feature>
<feature type="domain" description="VWFA 7" evidence="3">
    <location>
        <begin position="1194"/>
        <end position="1376"/>
    </location>
</feature>
<feature type="domain" description="Collagen-like 1" evidence="2">
    <location>
        <begin position="1395"/>
        <end position="1446"/>
    </location>
</feature>
<feature type="domain" description="Collagen-like 2" evidence="2">
    <location>
        <begin position="1434"/>
        <end position="1490"/>
    </location>
</feature>
<feature type="domain" description="Collagen-like 3" evidence="2">
    <location>
        <begin position="1464"/>
        <end position="1520"/>
    </location>
</feature>
<feature type="domain" description="Collagen-like 4" evidence="2">
    <location>
        <begin position="1524"/>
        <end position="1580"/>
    </location>
</feature>
<feature type="domain" description="Collagen-like 5" evidence="2">
    <location>
        <begin position="1579"/>
        <end position="1629"/>
    </location>
</feature>
<feature type="domain" description="Collagen-like 6" evidence="2">
    <location>
        <begin position="1674"/>
        <end position="1729"/>
    </location>
</feature>
<feature type="domain" description="VWFA 8" evidence="3">
    <location>
        <begin position="1758"/>
        <end position="1965"/>
    </location>
</feature>
<feature type="domain" description="VWFA 9" evidence="3">
    <location>
        <begin position="1963"/>
        <end position="2154"/>
    </location>
</feature>
<feature type="domain" description="VWFA 10" evidence="3">
    <location>
        <begin position="2291"/>
        <end position="2487"/>
    </location>
</feature>
<feature type="region of interest" description="Nonhelical region">
    <location>
        <begin position="19"/>
        <end position="1394"/>
    </location>
</feature>
<feature type="region of interest" description="Triple-helical region">
    <location>
        <begin position="1395"/>
        <end position="1728"/>
    </location>
</feature>
<feature type="region of interest" description="Disordered" evidence="4">
    <location>
        <begin position="1404"/>
        <end position="1693"/>
    </location>
</feature>
<feature type="region of interest" description="Nonhelical region">
    <location>
        <begin position="1729"/>
        <end position="2615"/>
    </location>
</feature>
<feature type="short sequence motif" description="Cell attachment site" evidence="2">
    <location>
        <begin position="1430"/>
        <end position="1432"/>
    </location>
</feature>
<feature type="compositionally biased region" description="Low complexity" evidence="4">
    <location>
        <begin position="1511"/>
        <end position="1522"/>
    </location>
</feature>
<feature type="compositionally biased region" description="Low complexity" evidence="4">
    <location>
        <begin position="1601"/>
        <end position="1611"/>
    </location>
</feature>
<feature type="compositionally biased region" description="Low complexity" evidence="4">
    <location>
        <begin position="1622"/>
        <end position="1641"/>
    </location>
</feature>
<feature type="glycosylation site" description="N-linked (GlcNAc...) asparagine" evidence="2">
    <location>
        <position position="201"/>
    </location>
</feature>
<feature type="glycosylation site" description="N-linked (GlcNAc...) asparagine" evidence="2">
    <location>
        <position position="260"/>
    </location>
</feature>
<feature type="glycosylation site" description="N-linked (GlcNAc...) asparagine" evidence="2">
    <location>
        <position position="835"/>
    </location>
</feature>
<feature type="glycosylation site" description="N-linked (GlcNAc...) asparagine" evidence="2">
    <location>
        <position position="2509"/>
    </location>
</feature>
<feature type="splice variant" id="VSP_033912" description="In isoform 2." evidence="8">
    <original>L</original>
    <variation>W</variation>
    <location>
        <position position="2526"/>
    </location>
</feature>
<feature type="splice variant" id="VSP_033913" description="In isoform 2." evidence="8">
    <location>
        <begin position="2527"/>
        <end position="2615"/>
    </location>
</feature>
<feature type="sequence variant" id="VAR_059234" description="In dbSNP:rs1453241." evidence="7">
    <original>E</original>
    <variation>K</variation>
    <location>
        <position position="455"/>
    </location>
</feature>
<feature type="sequence variant" id="VAR_059235" description="In dbSNP:rs9882852.">
    <original>N</original>
    <variation>H</variation>
    <location>
        <position position="641"/>
    </location>
</feature>
<feature type="sequence variant" id="VAR_059236" description="In dbSNP:rs16827168.">
    <original>H</original>
    <variation>R</variation>
    <location>
        <position position="805"/>
    </location>
</feature>
<feature type="sequence variant" id="VAR_059237" description="In dbSNP:rs11917356.">
    <original>D</original>
    <variation>G</variation>
    <location>
        <position position="982"/>
    </location>
</feature>
<feature type="sequence variant" id="VAR_059238" description="In dbSNP:rs1353613.">
    <original>I</original>
    <variation>M</variation>
    <location>
        <position position="1114"/>
    </location>
</feature>
<feature type="sequence variant" id="VAR_059239" description="In dbSNP:rs12488457." evidence="7">
    <original>T</original>
    <variation>P</variation>
    <location>
        <position position="1280"/>
    </location>
</feature>
<feature type="sequence variant" id="VAR_059240" description="In dbSNP:rs1497312.">
    <original>C</original>
    <variation>S</variation>
    <location>
        <position position="1477"/>
    </location>
</feature>
<feature type="sequence variant" id="VAR_059241" description="In dbSNP:rs16827497.">
    <original>S</original>
    <variation>P</variation>
    <location>
        <position position="1589"/>
    </location>
</feature>
<feature type="sequence variant" id="VAR_061119" description="In dbSNP:rs60021408.">
    <original>D</original>
    <variation>N</variation>
    <location>
        <position position="2175"/>
    </location>
</feature>
<feature type="sequence variant" id="VAR_043607" description="In dbSNP:rs9883988." evidence="5 7">
    <original>Q</original>
    <variation>R</variation>
    <location>
        <position position="2188"/>
    </location>
</feature>
<feature type="sequence variant" id="VAR_043608" description="In dbSNP:rs819085." evidence="5 7">
    <original>G</original>
    <variation>D</variation>
    <location>
        <position position="2205"/>
    </location>
</feature>
<feature type="sequence conflict" description="In Ref. 4; BAC04092." evidence="9" ref="4">
    <original>K</original>
    <variation>R</variation>
    <location>
        <position position="2482"/>
    </location>
</feature>
<feature type="sequence conflict" description="In Ref. 4; BAC04092." evidence="9" ref="4">
    <original>S</original>
    <variation>P</variation>
    <location>
        <position position="2512"/>
    </location>
</feature>
<feature type="sequence conflict" description="In Ref. 2; CAP20002/CAP20003 and 4; BAC04092." evidence="9" ref="2 4">
    <original>S</original>
    <variation>N</variation>
    <location>
        <position position="2560"/>
    </location>
</feature>